<protein>
    <recommendedName>
        <fullName evidence="1">Tyrosine--tRNA ligase 2</fullName>
        <ecNumber evidence="1">6.1.1.1</ecNumber>
    </recommendedName>
    <alternativeName>
        <fullName evidence="1">Tyrosyl-tRNA synthetase 2</fullName>
        <shortName evidence="1">TyrRS 2</shortName>
    </alternativeName>
</protein>
<comment type="function">
    <text evidence="1">Catalyzes the attachment of tyrosine to tRNA(Tyr) in a two-step reaction: tyrosine is first activated by ATP to form Tyr-AMP and then transferred to the acceptor end of tRNA(Tyr).</text>
</comment>
<comment type="catalytic activity">
    <reaction evidence="1">
        <text>tRNA(Tyr) + L-tyrosine + ATP = L-tyrosyl-tRNA(Tyr) + AMP + diphosphate + H(+)</text>
        <dbReference type="Rhea" id="RHEA:10220"/>
        <dbReference type="Rhea" id="RHEA-COMP:9706"/>
        <dbReference type="Rhea" id="RHEA-COMP:9707"/>
        <dbReference type="ChEBI" id="CHEBI:15378"/>
        <dbReference type="ChEBI" id="CHEBI:30616"/>
        <dbReference type="ChEBI" id="CHEBI:33019"/>
        <dbReference type="ChEBI" id="CHEBI:58315"/>
        <dbReference type="ChEBI" id="CHEBI:78442"/>
        <dbReference type="ChEBI" id="CHEBI:78536"/>
        <dbReference type="ChEBI" id="CHEBI:456215"/>
        <dbReference type="EC" id="6.1.1.1"/>
    </reaction>
</comment>
<comment type="subunit">
    <text evidence="1">Homodimer.</text>
</comment>
<comment type="subcellular location">
    <subcellularLocation>
        <location evidence="1">Cytoplasm</location>
    </subcellularLocation>
</comment>
<comment type="similarity">
    <text evidence="1">Belongs to the class-I aminoacyl-tRNA synthetase family. TyrS type 2 subfamily.</text>
</comment>
<evidence type="ECO:0000255" key="1">
    <source>
        <dbReference type="HAMAP-Rule" id="MF_02007"/>
    </source>
</evidence>
<organism>
    <name type="scientific">Vibrio vulnificus (strain YJ016)</name>
    <dbReference type="NCBI Taxonomy" id="196600"/>
    <lineage>
        <taxon>Bacteria</taxon>
        <taxon>Pseudomonadati</taxon>
        <taxon>Pseudomonadota</taxon>
        <taxon>Gammaproteobacteria</taxon>
        <taxon>Vibrionales</taxon>
        <taxon>Vibrionaceae</taxon>
        <taxon>Vibrio</taxon>
    </lineage>
</organism>
<feature type="chain" id="PRO_0000236779" description="Tyrosine--tRNA ligase 2">
    <location>
        <begin position="1"/>
        <end position="395"/>
    </location>
</feature>
<feature type="domain" description="S4 RNA-binding" evidence="1">
    <location>
        <begin position="334"/>
        <end position="394"/>
    </location>
</feature>
<feature type="short sequence motif" description="'HIGH' region">
    <location>
        <begin position="42"/>
        <end position="51"/>
    </location>
</feature>
<feature type="short sequence motif" description="'KMSKS' region">
    <location>
        <begin position="226"/>
        <end position="230"/>
    </location>
</feature>
<feature type="binding site" evidence="1">
    <location>
        <position position="229"/>
    </location>
    <ligand>
        <name>ATP</name>
        <dbReference type="ChEBI" id="CHEBI:30616"/>
    </ligand>
</feature>
<gene>
    <name evidence="1" type="primary">tyrS2</name>
    <name type="ordered locus">VV2723</name>
</gene>
<dbReference type="EC" id="6.1.1.1" evidence="1"/>
<dbReference type="EMBL" id="BA000037">
    <property type="protein sequence ID" value="BAC95487.1"/>
    <property type="molecule type" value="Genomic_DNA"/>
</dbReference>
<dbReference type="SMR" id="Q7MHZ4"/>
<dbReference type="STRING" id="672.VV93_v1c24380"/>
<dbReference type="KEGG" id="vvy:VV2723"/>
<dbReference type="eggNOG" id="COG0162">
    <property type="taxonomic scope" value="Bacteria"/>
</dbReference>
<dbReference type="HOGENOM" id="CLU_024003_5_0_6"/>
<dbReference type="Proteomes" id="UP000002675">
    <property type="component" value="Chromosome I"/>
</dbReference>
<dbReference type="GO" id="GO:0005829">
    <property type="term" value="C:cytosol"/>
    <property type="evidence" value="ECO:0007669"/>
    <property type="project" value="TreeGrafter"/>
</dbReference>
<dbReference type="GO" id="GO:0005524">
    <property type="term" value="F:ATP binding"/>
    <property type="evidence" value="ECO:0007669"/>
    <property type="project" value="UniProtKB-UniRule"/>
</dbReference>
<dbReference type="GO" id="GO:0003723">
    <property type="term" value="F:RNA binding"/>
    <property type="evidence" value="ECO:0007669"/>
    <property type="project" value="UniProtKB-KW"/>
</dbReference>
<dbReference type="GO" id="GO:0004831">
    <property type="term" value="F:tyrosine-tRNA ligase activity"/>
    <property type="evidence" value="ECO:0007669"/>
    <property type="project" value="UniProtKB-UniRule"/>
</dbReference>
<dbReference type="GO" id="GO:0006437">
    <property type="term" value="P:tyrosyl-tRNA aminoacylation"/>
    <property type="evidence" value="ECO:0007669"/>
    <property type="project" value="UniProtKB-UniRule"/>
</dbReference>
<dbReference type="CDD" id="cd00165">
    <property type="entry name" value="S4"/>
    <property type="match status" value="1"/>
</dbReference>
<dbReference type="CDD" id="cd00805">
    <property type="entry name" value="TyrRS_core"/>
    <property type="match status" value="1"/>
</dbReference>
<dbReference type="FunFam" id="1.10.240.10:FF:000006">
    <property type="entry name" value="Tyrosine--tRNA ligase"/>
    <property type="match status" value="1"/>
</dbReference>
<dbReference type="FunFam" id="3.10.290.10:FF:000022">
    <property type="entry name" value="Tyrosine--tRNA ligase"/>
    <property type="match status" value="1"/>
</dbReference>
<dbReference type="FunFam" id="3.40.50.620:FF:000061">
    <property type="entry name" value="Tyrosine--tRNA ligase"/>
    <property type="match status" value="1"/>
</dbReference>
<dbReference type="Gene3D" id="3.40.50.620">
    <property type="entry name" value="HUPs"/>
    <property type="match status" value="1"/>
</dbReference>
<dbReference type="Gene3D" id="3.10.290.10">
    <property type="entry name" value="RNA-binding S4 domain"/>
    <property type="match status" value="1"/>
</dbReference>
<dbReference type="Gene3D" id="1.10.240.10">
    <property type="entry name" value="Tyrosyl-Transfer RNA Synthetase"/>
    <property type="match status" value="1"/>
</dbReference>
<dbReference type="HAMAP" id="MF_02007">
    <property type="entry name" value="Tyr_tRNA_synth_type2"/>
    <property type="match status" value="1"/>
</dbReference>
<dbReference type="InterPro" id="IPR001412">
    <property type="entry name" value="aa-tRNA-synth_I_CS"/>
</dbReference>
<dbReference type="InterPro" id="IPR002305">
    <property type="entry name" value="aa-tRNA-synth_Ic"/>
</dbReference>
<dbReference type="InterPro" id="IPR014729">
    <property type="entry name" value="Rossmann-like_a/b/a_fold"/>
</dbReference>
<dbReference type="InterPro" id="IPR036986">
    <property type="entry name" value="S4_RNA-bd_sf"/>
</dbReference>
<dbReference type="InterPro" id="IPR002307">
    <property type="entry name" value="Tyr-tRNA-ligase"/>
</dbReference>
<dbReference type="InterPro" id="IPR024088">
    <property type="entry name" value="Tyr-tRNA-ligase_bac-type"/>
</dbReference>
<dbReference type="InterPro" id="IPR024108">
    <property type="entry name" value="Tyr-tRNA-ligase_bac_2"/>
</dbReference>
<dbReference type="NCBIfam" id="TIGR00234">
    <property type="entry name" value="tyrS"/>
    <property type="match status" value="1"/>
</dbReference>
<dbReference type="PANTHER" id="PTHR11766:SF1">
    <property type="entry name" value="TYROSINE--TRNA LIGASE"/>
    <property type="match status" value="1"/>
</dbReference>
<dbReference type="PANTHER" id="PTHR11766">
    <property type="entry name" value="TYROSYL-TRNA SYNTHETASE"/>
    <property type="match status" value="1"/>
</dbReference>
<dbReference type="Pfam" id="PF00579">
    <property type="entry name" value="tRNA-synt_1b"/>
    <property type="match status" value="1"/>
</dbReference>
<dbReference type="PRINTS" id="PR01040">
    <property type="entry name" value="TRNASYNTHTYR"/>
</dbReference>
<dbReference type="SUPFAM" id="SSF55174">
    <property type="entry name" value="Alpha-L RNA-binding motif"/>
    <property type="match status" value="1"/>
</dbReference>
<dbReference type="SUPFAM" id="SSF52374">
    <property type="entry name" value="Nucleotidylyl transferase"/>
    <property type="match status" value="1"/>
</dbReference>
<dbReference type="PROSITE" id="PS00178">
    <property type="entry name" value="AA_TRNA_LIGASE_I"/>
    <property type="match status" value="1"/>
</dbReference>
<dbReference type="PROSITE" id="PS50889">
    <property type="entry name" value="S4"/>
    <property type="match status" value="1"/>
</dbReference>
<proteinExistence type="inferred from homology"/>
<keyword id="KW-0030">Aminoacyl-tRNA synthetase</keyword>
<keyword id="KW-0067">ATP-binding</keyword>
<keyword id="KW-0963">Cytoplasm</keyword>
<keyword id="KW-0436">Ligase</keyword>
<keyword id="KW-0547">Nucleotide-binding</keyword>
<keyword id="KW-0648">Protein biosynthesis</keyword>
<keyword id="KW-0694">RNA-binding</keyword>
<name>SYY2_VIBVY</name>
<reference key="1">
    <citation type="journal article" date="2003" name="Genome Res.">
        <title>Comparative genome analysis of Vibrio vulnificus, a marine pathogen.</title>
        <authorList>
            <person name="Chen C.-Y."/>
            <person name="Wu K.-M."/>
            <person name="Chang Y.-C."/>
            <person name="Chang C.-H."/>
            <person name="Tsai H.-C."/>
            <person name="Liao T.-L."/>
            <person name="Liu Y.-M."/>
            <person name="Chen H.-J."/>
            <person name="Shen A.B.-T."/>
            <person name="Li J.-C."/>
            <person name="Su T.-L."/>
            <person name="Shao C.-P."/>
            <person name="Lee C.-T."/>
            <person name="Hor L.-I."/>
            <person name="Tsai S.-F."/>
        </authorList>
    </citation>
    <scope>NUCLEOTIDE SEQUENCE [LARGE SCALE GENOMIC DNA]</scope>
    <source>
        <strain>YJ016</strain>
    </source>
</reference>
<accession>Q7MHZ4</accession>
<sequence>MASIEAALAEIKRGVEELIPEEELIAKLKEGRPLRIKLGADPTAPDIHLGHTVILNKLRAFQDLGHDVTFLIGDFTGMVGDPTGKNSTRPPLTREDVLRNAETYKQQVFKILDPAKTKIQFNSEWLSELGAEGMIRLAANQTVARMLERDDFKKRYAGGQPIAIHEFMYPLLQGYDSVAMETDVELGGTDQKFNLLMGRELQKANGQKPQVVLMMPLLVGLDGEKKMSKSANNYIGVSEAPSEMFGKIMSISDDLMWSYYELLSFRPLEELAQFKADVAAGKNPRDIKVLLAKEIIARFHSEADADAAEQEFVNRFAKNQIPDEMPEFTFAAGTPMANLLKEAELCSSTSEAMRMVKQGAAKMDGEKVEDAKAEPAVGTYVFQVGKRKFARITIA</sequence>